<gene>
    <name evidence="1" type="primary">atpB</name>
</gene>
<feature type="chain" id="PRO_0000254521" description="ATP synthase subunit beta, chloroplastic">
    <location>
        <begin position="1"/>
        <end position="498"/>
    </location>
</feature>
<feature type="binding site" evidence="1">
    <location>
        <begin position="172"/>
        <end position="179"/>
    </location>
    <ligand>
        <name>ATP</name>
        <dbReference type="ChEBI" id="CHEBI:30616"/>
    </ligand>
</feature>
<geneLocation type="chloroplast"/>
<proteinExistence type="inferred from homology"/>
<organism>
    <name type="scientific">Saruma henryi</name>
    <name type="common">Upright wild ginger</name>
    <dbReference type="NCBI Taxonomy" id="13258"/>
    <lineage>
        <taxon>Eukaryota</taxon>
        <taxon>Viridiplantae</taxon>
        <taxon>Streptophyta</taxon>
        <taxon>Embryophyta</taxon>
        <taxon>Tracheophyta</taxon>
        <taxon>Spermatophyta</taxon>
        <taxon>Magnoliopsida</taxon>
        <taxon>Magnoliidae</taxon>
        <taxon>Piperales</taxon>
        <taxon>Asaraceae</taxon>
        <taxon>Saruma</taxon>
    </lineage>
</organism>
<comment type="function">
    <text evidence="1">Produces ATP from ADP in the presence of a proton gradient across the membrane. The catalytic sites are hosted primarily by the beta subunits.</text>
</comment>
<comment type="catalytic activity">
    <reaction evidence="1">
        <text>ATP + H2O + 4 H(+)(in) = ADP + phosphate + 5 H(+)(out)</text>
        <dbReference type="Rhea" id="RHEA:57720"/>
        <dbReference type="ChEBI" id="CHEBI:15377"/>
        <dbReference type="ChEBI" id="CHEBI:15378"/>
        <dbReference type="ChEBI" id="CHEBI:30616"/>
        <dbReference type="ChEBI" id="CHEBI:43474"/>
        <dbReference type="ChEBI" id="CHEBI:456216"/>
        <dbReference type="EC" id="7.1.2.2"/>
    </reaction>
</comment>
<comment type="subunit">
    <text evidence="1">F-type ATPases have 2 components, CF(1) - the catalytic core - and CF(0) - the membrane proton channel. CF(1) has five subunits: alpha(3), beta(3), gamma(1), delta(1), epsilon(1). CF(0) has four main subunits: a(1), b(1), b'(1) and c(9-12).</text>
</comment>
<comment type="subcellular location">
    <subcellularLocation>
        <location evidence="1">Plastid</location>
        <location evidence="1">Chloroplast thylakoid membrane</location>
        <topology evidence="1">Peripheral membrane protein</topology>
    </subcellularLocation>
</comment>
<comment type="similarity">
    <text evidence="1">Belongs to the ATPase alpha/beta chains family.</text>
</comment>
<evidence type="ECO:0000255" key="1">
    <source>
        <dbReference type="HAMAP-Rule" id="MF_01347"/>
    </source>
</evidence>
<accession>Q9MTY2</accession>
<sequence>MRINPTTSGPGVSTLEGKNLGRIAQIIGPVLDVAFPPGKMPNIYNAFVVKGRDTAGQQINVTCEVQQLLGNNRVRTVAMSATDGLMRGMEVIDTGAPLSVPVGGATLGRIFNVLGEPVDNLGPVDTRTTSPIHRSAPAFIQLDTRLSIFETGIKVVDLLAPYRRGGKIGLFGGAGVGKTVLIMELINNIAKAHGGVSVFGGVGERTREGNDLYMEMKESGVINEQNLAESKVALVYGQMNEPPGARMRVGLTALTMAEYFRDVNEQDVLLFIDNIFRFVQAGSEVSALLGRMPSAVGYQPTLSTEMGSLQERITSTKEGSITSIQAVYVPADDLTDPAPATTFAHLDATTVLSRGLAAKGIYPAVDPLDSTSTMLQPRIVGEEHYETAQRVKQTSQRYKELQDIIAILGLDELSEEDRLTVARARKIERFLSQPFFVAEVFTGSPGKYVGLAETIRGFQLILSGELDGLPEQAFYLVGNIDEATAKAINLEMRSNLKK</sequence>
<keyword id="KW-0066">ATP synthesis</keyword>
<keyword id="KW-0067">ATP-binding</keyword>
<keyword id="KW-0139">CF(1)</keyword>
<keyword id="KW-0150">Chloroplast</keyword>
<keyword id="KW-0375">Hydrogen ion transport</keyword>
<keyword id="KW-0406">Ion transport</keyword>
<keyword id="KW-0472">Membrane</keyword>
<keyword id="KW-0547">Nucleotide-binding</keyword>
<keyword id="KW-0934">Plastid</keyword>
<keyword id="KW-0793">Thylakoid</keyword>
<keyword id="KW-1278">Translocase</keyword>
<keyword id="KW-0813">Transport</keyword>
<dbReference type="EC" id="7.1.2.2" evidence="1"/>
<dbReference type="EMBL" id="AJ235595">
    <property type="protein sequence ID" value="CAB89723.1"/>
    <property type="molecule type" value="Genomic_DNA"/>
</dbReference>
<dbReference type="EMBL" id="AF528860">
    <property type="protein sequence ID" value="AAQ09248.1"/>
    <property type="molecule type" value="Genomic_DNA"/>
</dbReference>
<dbReference type="SMR" id="Q9MTY2"/>
<dbReference type="GO" id="GO:0009535">
    <property type="term" value="C:chloroplast thylakoid membrane"/>
    <property type="evidence" value="ECO:0007669"/>
    <property type="project" value="UniProtKB-SubCell"/>
</dbReference>
<dbReference type="GO" id="GO:0005739">
    <property type="term" value="C:mitochondrion"/>
    <property type="evidence" value="ECO:0007669"/>
    <property type="project" value="GOC"/>
</dbReference>
<dbReference type="GO" id="GO:0045259">
    <property type="term" value="C:proton-transporting ATP synthase complex"/>
    <property type="evidence" value="ECO:0007669"/>
    <property type="project" value="UniProtKB-KW"/>
</dbReference>
<dbReference type="GO" id="GO:0005524">
    <property type="term" value="F:ATP binding"/>
    <property type="evidence" value="ECO:0007669"/>
    <property type="project" value="UniProtKB-UniRule"/>
</dbReference>
<dbReference type="GO" id="GO:0016887">
    <property type="term" value="F:ATP hydrolysis activity"/>
    <property type="evidence" value="ECO:0007669"/>
    <property type="project" value="InterPro"/>
</dbReference>
<dbReference type="GO" id="GO:0046933">
    <property type="term" value="F:proton-transporting ATP synthase activity, rotational mechanism"/>
    <property type="evidence" value="ECO:0007669"/>
    <property type="project" value="UniProtKB-UniRule"/>
</dbReference>
<dbReference type="GO" id="GO:0042776">
    <property type="term" value="P:proton motive force-driven mitochondrial ATP synthesis"/>
    <property type="evidence" value="ECO:0007669"/>
    <property type="project" value="TreeGrafter"/>
</dbReference>
<dbReference type="CDD" id="cd18110">
    <property type="entry name" value="ATP-synt_F1_beta_C"/>
    <property type="match status" value="1"/>
</dbReference>
<dbReference type="CDD" id="cd18115">
    <property type="entry name" value="ATP-synt_F1_beta_N"/>
    <property type="match status" value="1"/>
</dbReference>
<dbReference type="CDD" id="cd01133">
    <property type="entry name" value="F1-ATPase_beta_CD"/>
    <property type="match status" value="1"/>
</dbReference>
<dbReference type="FunFam" id="1.10.1140.10:FF:000001">
    <property type="entry name" value="ATP synthase subunit beta"/>
    <property type="match status" value="1"/>
</dbReference>
<dbReference type="FunFam" id="3.40.50.12240:FF:000006">
    <property type="entry name" value="ATP synthase subunit beta"/>
    <property type="match status" value="1"/>
</dbReference>
<dbReference type="FunFam" id="3.40.50.300:FF:000004">
    <property type="entry name" value="ATP synthase subunit beta"/>
    <property type="match status" value="1"/>
</dbReference>
<dbReference type="FunFam" id="2.40.10.170:FF:000002">
    <property type="entry name" value="ATP synthase subunit beta, chloroplastic"/>
    <property type="match status" value="1"/>
</dbReference>
<dbReference type="Gene3D" id="2.40.10.170">
    <property type="match status" value="1"/>
</dbReference>
<dbReference type="Gene3D" id="1.10.1140.10">
    <property type="entry name" value="Bovine Mitochondrial F1-atpase, Atp Synthase Beta Chain, Chain D, domain 3"/>
    <property type="match status" value="1"/>
</dbReference>
<dbReference type="Gene3D" id="3.40.50.300">
    <property type="entry name" value="P-loop containing nucleotide triphosphate hydrolases"/>
    <property type="match status" value="1"/>
</dbReference>
<dbReference type="HAMAP" id="MF_01347">
    <property type="entry name" value="ATP_synth_beta_bact"/>
    <property type="match status" value="1"/>
</dbReference>
<dbReference type="InterPro" id="IPR003593">
    <property type="entry name" value="AAA+_ATPase"/>
</dbReference>
<dbReference type="InterPro" id="IPR055190">
    <property type="entry name" value="ATP-synt_VA_C"/>
</dbReference>
<dbReference type="InterPro" id="IPR005722">
    <property type="entry name" value="ATP_synth_F1_bsu"/>
</dbReference>
<dbReference type="InterPro" id="IPR020003">
    <property type="entry name" value="ATPase_a/bsu_AS"/>
</dbReference>
<dbReference type="InterPro" id="IPR050053">
    <property type="entry name" value="ATPase_alpha/beta_chains"/>
</dbReference>
<dbReference type="InterPro" id="IPR004100">
    <property type="entry name" value="ATPase_F1/V1/A1_a/bsu_N"/>
</dbReference>
<dbReference type="InterPro" id="IPR036121">
    <property type="entry name" value="ATPase_F1/V1/A1_a/bsu_N_sf"/>
</dbReference>
<dbReference type="InterPro" id="IPR000194">
    <property type="entry name" value="ATPase_F1/V1/A1_a/bsu_nucl-bd"/>
</dbReference>
<dbReference type="InterPro" id="IPR024034">
    <property type="entry name" value="ATPase_F1/V1_b/a_C"/>
</dbReference>
<dbReference type="InterPro" id="IPR027417">
    <property type="entry name" value="P-loop_NTPase"/>
</dbReference>
<dbReference type="NCBIfam" id="TIGR01039">
    <property type="entry name" value="atpD"/>
    <property type="match status" value="1"/>
</dbReference>
<dbReference type="PANTHER" id="PTHR15184">
    <property type="entry name" value="ATP SYNTHASE"/>
    <property type="match status" value="1"/>
</dbReference>
<dbReference type="PANTHER" id="PTHR15184:SF71">
    <property type="entry name" value="ATP SYNTHASE SUBUNIT BETA, MITOCHONDRIAL"/>
    <property type="match status" value="1"/>
</dbReference>
<dbReference type="Pfam" id="PF00006">
    <property type="entry name" value="ATP-synt_ab"/>
    <property type="match status" value="1"/>
</dbReference>
<dbReference type="Pfam" id="PF02874">
    <property type="entry name" value="ATP-synt_ab_N"/>
    <property type="match status" value="1"/>
</dbReference>
<dbReference type="Pfam" id="PF22919">
    <property type="entry name" value="ATP-synt_VA_C"/>
    <property type="match status" value="1"/>
</dbReference>
<dbReference type="SMART" id="SM00382">
    <property type="entry name" value="AAA"/>
    <property type="match status" value="1"/>
</dbReference>
<dbReference type="SUPFAM" id="SSF47917">
    <property type="entry name" value="C-terminal domain of alpha and beta subunits of F1 ATP synthase"/>
    <property type="match status" value="1"/>
</dbReference>
<dbReference type="SUPFAM" id="SSF50615">
    <property type="entry name" value="N-terminal domain of alpha and beta subunits of F1 ATP synthase"/>
    <property type="match status" value="1"/>
</dbReference>
<dbReference type="SUPFAM" id="SSF52540">
    <property type="entry name" value="P-loop containing nucleoside triphosphate hydrolases"/>
    <property type="match status" value="1"/>
</dbReference>
<dbReference type="PROSITE" id="PS00152">
    <property type="entry name" value="ATPASE_ALPHA_BETA"/>
    <property type="match status" value="1"/>
</dbReference>
<protein>
    <recommendedName>
        <fullName evidence="1">ATP synthase subunit beta, chloroplastic</fullName>
        <ecNumber evidence="1">7.1.2.2</ecNumber>
    </recommendedName>
    <alternativeName>
        <fullName evidence="1">ATP synthase F1 sector subunit beta</fullName>
    </alternativeName>
    <alternativeName>
        <fullName evidence="1">F-ATPase subunit beta</fullName>
    </alternativeName>
</protein>
<name>ATPB_SARHE</name>
<reference key="1">
    <citation type="journal article" date="2000" name="Syst. Biol.">
        <title>Phylogenetics of flowering plants based upon a combined analysis of plastid atpB and rbcL gene sequences.</title>
        <authorList>
            <person name="Savolainen V."/>
            <person name="Chase M.W."/>
            <person name="Morton C.M."/>
            <person name="Hoot S.B."/>
            <person name="Soltis D.E."/>
            <person name="Bayer C."/>
            <person name="Fay M.F."/>
            <person name="de Bruijn A."/>
            <person name="Sullivan S."/>
            <person name="Qiu Y.-L."/>
        </authorList>
    </citation>
    <scope>NUCLEOTIDE SEQUENCE [GENOMIC DNA]</scope>
</reference>
<reference key="2">
    <citation type="submission" date="2002-07" db="EMBL/GenBank/DDBJ databases">
        <title>Parsing out signal and noise for seed-plant phylogenetic inference.</title>
        <authorList>
            <person name="Graham S.W."/>
            <person name="Rai H.S."/>
            <person name="Ikegami K."/>
            <person name="Reeves P.A."/>
            <person name="Olmstead R.G."/>
        </authorList>
    </citation>
    <scope>NUCLEOTIDE SEQUENCE [GENOMIC DNA]</scope>
</reference>